<gene>
    <name type="primary">cse1</name>
    <name type="synonym">casA</name>
    <name type="ordered locus">TTHB188</name>
</gene>
<comment type="function">
    <text evidence="1">CRISPR (clustered regularly interspaced short palindromic repeat), is an adaptive immune system that provides protection against mobile genetic elements (viruses, transposable elements and conjugative plasmids). CRISPR clusters contain sequences complementary to antecedent mobile elements and target invading nucleic acids. CRISPR clusters are transcribed and processed into CRISPR RNA (crRNA) (By similarity).</text>
</comment>
<comment type="function">
    <text evidence="1">A component of Cascade, which participates in CRISPR interference, the third stage of CRISPR immunity. Cascade binds both crRNA and in a sequence-specific manner negatively supercoiled dsDNA target. This leads to the formation of an R-loop in which the crRNA binds the target DNA, displacing the noncomplementary strand. Cas3 is recruited to Cascade, probably via interactions with CasA, nicks target DNA and then unwinds and cleaves the target, leading to DNA degradation and invader neutralization. CasA is not required for formation of Cascade, but probably enhances binding to and subsequent recognition of both target dsDNA and ssDNA (By similarity).</text>
</comment>
<comment type="subunit">
    <text evidence="1">Monomer. Part of the Cascade ribonucleoprotein complex. Interacts directly with the 5' end of crRNA, CasB, CasD and CasE. Binding of target ssRNA or dsDNA causes a conformational change in the Cascade complex; CasA is required for high affinity target DNA binding. Interacts with Cas3 once Cascade has recognized target DNA (By similarity).</text>
</comment>
<comment type="similarity">
    <text evidence="2">Belongs to the CRISPR associated protein CasA/Cse1 family. Type I-E/Ecoli subfamily.</text>
</comment>
<dbReference type="EMBL" id="AP008227">
    <property type="protein sequence ID" value="BAD71984.1"/>
    <property type="molecule type" value="Genomic_DNA"/>
</dbReference>
<dbReference type="RefSeq" id="WP_011229116.1">
    <property type="nucleotide sequence ID" value="NC_006462.1"/>
</dbReference>
<dbReference type="RefSeq" id="YP_145427.1">
    <property type="nucleotide sequence ID" value="NC_006462.1"/>
</dbReference>
<dbReference type="PDB" id="4AN8">
    <property type="method" value="X-ray"/>
    <property type="resolution" value="2.30 A"/>
    <property type="chains" value="A/B=1-502"/>
</dbReference>
<dbReference type="PDB" id="4EJ3">
    <property type="method" value="X-ray"/>
    <property type="resolution" value="2.52 A"/>
    <property type="chains" value="A/B=1-502"/>
</dbReference>
<dbReference type="PDB" id="4F3E">
    <property type="method" value="X-ray"/>
    <property type="resolution" value="2.30 A"/>
    <property type="chains" value="A/B=1-502"/>
</dbReference>
<dbReference type="PDBsum" id="4AN8"/>
<dbReference type="PDBsum" id="4EJ3"/>
<dbReference type="PDBsum" id="4F3E"/>
<dbReference type="SMR" id="Q53VY1"/>
<dbReference type="EnsemblBacteria" id="BAD71984">
    <property type="protein sequence ID" value="BAD71984"/>
    <property type="gene ID" value="BAD71984"/>
</dbReference>
<dbReference type="GeneID" id="3167882"/>
<dbReference type="KEGG" id="ttj:TTHB188"/>
<dbReference type="PATRIC" id="fig|300852.9.peg.2139"/>
<dbReference type="HOGENOM" id="CLU_034285_1_0_0"/>
<dbReference type="EvolutionaryTrace" id="Q53VY1"/>
<dbReference type="Proteomes" id="UP000000532">
    <property type="component" value="Plasmid pTT27"/>
</dbReference>
<dbReference type="GO" id="GO:0051607">
    <property type="term" value="P:defense response to virus"/>
    <property type="evidence" value="ECO:0007669"/>
    <property type="project" value="UniProtKB-KW"/>
</dbReference>
<dbReference type="CDD" id="cd09669">
    <property type="entry name" value="Cse1_I-E"/>
    <property type="match status" value="1"/>
</dbReference>
<dbReference type="Gene3D" id="1.10.132.100">
    <property type="match status" value="1"/>
</dbReference>
<dbReference type="InterPro" id="IPR013381">
    <property type="entry name" value="CRISPR-assoc_prot_Cse1"/>
</dbReference>
<dbReference type="NCBIfam" id="TIGR02547">
    <property type="entry name" value="casA_cse1"/>
    <property type="match status" value="1"/>
</dbReference>
<dbReference type="Pfam" id="PF09481">
    <property type="entry name" value="CRISPR_Cse1"/>
    <property type="match status" value="1"/>
</dbReference>
<proteinExistence type="evidence at protein level"/>
<geneLocation type="plasmid">
    <name>pTT27</name>
</geneLocation>
<protein>
    <recommendedName>
        <fullName>CRISPR-associated protein CasA/Cse1</fullName>
    </recommendedName>
    <alternativeName>
        <fullName>CRISPR type I-E/Ecoli-associated protein CasA/Cse1</fullName>
    </alternativeName>
</protein>
<name>CSE1_THET8</name>
<sequence>MGSLEKFNLIDEPWIPVLKGGRVVEVGIGEALLRAHEFARIETPSPLEEAVLHRLLLAVLHRALSGPRCPEDVLDWWRKGGFPQDPIRDYLNRFRDRFFLFHPEAPFLQVADLPEENPLPWSKLLPELASGNNPTLFDHTTEENLPKATYAQAARALLVHQAFAPGGLLRRYGVGSAKDAPVARPALFLPTGQNLLETLLLNLVPYTPEDDAPIWEVPPLRLGDLEGARTKWPLTGRTRVYTWPARGVRLLDEGDGVRFMGYGPGVEPLEATHRDPMVAQRLDAKGNLLVLRLSEERSFWRDFSAMLPRQGGKVAATLEHAENLQGELEDEGLEGRITLRVLGQVSDQAKVLDIRREVYPLPSGLLTPKAEENLEKALKMAEELGQGLKHLAQEVAKAVVGERDRGHGRSPYLEELTKLANSLPLERLYWHALDGAFPRFFARVEEEASLDLWREALRGAALEAWKATRRFLGTGARHLKALAQGEQEFGRLLGELGEEVRT</sequence>
<evidence type="ECO:0000250" key="1"/>
<evidence type="ECO:0000305" key="2"/>
<evidence type="ECO:0007829" key="3">
    <source>
        <dbReference type="PDB" id="4AN8"/>
    </source>
</evidence>
<evidence type="ECO:0007829" key="4">
    <source>
        <dbReference type="PDB" id="4F3E"/>
    </source>
</evidence>
<organism>
    <name type="scientific">Thermus thermophilus (strain ATCC 27634 / DSM 579 / HB8)</name>
    <dbReference type="NCBI Taxonomy" id="300852"/>
    <lineage>
        <taxon>Bacteria</taxon>
        <taxon>Thermotogati</taxon>
        <taxon>Deinococcota</taxon>
        <taxon>Deinococci</taxon>
        <taxon>Thermales</taxon>
        <taxon>Thermaceae</taxon>
        <taxon>Thermus</taxon>
    </lineage>
</organism>
<keyword id="KW-0002">3D-structure</keyword>
<keyword id="KW-0051">Antiviral defense</keyword>
<keyword id="KW-0614">Plasmid</keyword>
<keyword id="KW-1185">Reference proteome</keyword>
<accession>Q53VY1</accession>
<feature type="chain" id="PRO_0000418670" description="CRISPR-associated protein CasA/Cse1">
    <location>
        <begin position="1"/>
        <end position="502"/>
    </location>
</feature>
<feature type="strand" evidence="3">
    <location>
        <begin position="6"/>
        <end position="8"/>
    </location>
</feature>
<feature type="turn" evidence="3">
    <location>
        <begin position="9"/>
        <end position="11"/>
    </location>
</feature>
<feature type="strand" evidence="3">
    <location>
        <begin position="15"/>
        <end position="19"/>
    </location>
</feature>
<feature type="strand" evidence="3">
    <location>
        <begin position="22"/>
        <end position="26"/>
    </location>
</feature>
<feature type="helix" evidence="3">
    <location>
        <begin position="28"/>
        <end position="33"/>
    </location>
</feature>
<feature type="helix" evidence="3">
    <location>
        <begin position="35"/>
        <end position="37"/>
    </location>
</feature>
<feature type="strand" evidence="3">
    <location>
        <begin position="39"/>
        <end position="41"/>
    </location>
</feature>
<feature type="helix" evidence="3">
    <location>
        <begin position="46"/>
        <end position="63"/>
    </location>
</feature>
<feature type="helix" evidence="3">
    <location>
        <begin position="70"/>
        <end position="79"/>
    </location>
</feature>
<feature type="helix" evidence="3">
    <location>
        <begin position="84"/>
        <end position="94"/>
    </location>
</feature>
<feature type="helix" evidence="3">
    <location>
        <begin position="95"/>
        <end position="97"/>
    </location>
</feature>
<feature type="strand" evidence="3">
    <location>
        <begin position="99"/>
        <end position="101"/>
    </location>
</feature>
<feature type="strand" evidence="4">
    <location>
        <begin position="115"/>
        <end position="117"/>
    </location>
</feature>
<feature type="helix" evidence="3">
    <location>
        <begin position="121"/>
        <end position="124"/>
    </location>
</feature>
<feature type="helix" evidence="3">
    <location>
        <begin position="150"/>
        <end position="163"/>
    </location>
</feature>
<feature type="strand" evidence="3">
    <location>
        <begin position="167"/>
        <end position="171"/>
    </location>
</feature>
<feature type="strand" evidence="3">
    <location>
        <begin position="174"/>
        <end position="177"/>
    </location>
</feature>
<feature type="strand" evidence="3">
    <location>
        <begin position="183"/>
        <end position="185"/>
    </location>
</feature>
<feature type="strand" evidence="3">
    <location>
        <begin position="187"/>
        <end position="191"/>
    </location>
</feature>
<feature type="helix" evidence="3">
    <location>
        <begin position="195"/>
        <end position="202"/>
    </location>
</feature>
<feature type="helix" evidence="3">
    <location>
        <begin position="214"/>
        <end position="216"/>
    </location>
</feature>
<feature type="helix" evidence="3">
    <location>
        <begin position="222"/>
        <end position="225"/>
    </location>
</feature>
<feature type="helix" evidence="3">
    <location>
        <begin position="226"/>
        <end position="228"/>
    </location>
</feature>
<feature type="strand" evidence="3">
    <location>
        <begin position="231"/>
        <end position="234"/>
    </location>
</feature>
<feature type="helix" evidence="3">
    <location>
        <begin position="237"/>
        <end position="241"/>
    </location>
</feature>
<feature type="strand" evidence="3">
    <location>
        <begin position="246"/>
        <end position="252"/>
    </location>
</feature>
<feature type="strand" evidence="3">
    <location>
        <begin position="254"/>
        <end position="264"/>
    </location>
</feature>
<feature type="strand" evidence="3">
    <location>
        <begin position="267"/>
        <end position="269"/>
    </location>
</feature>
<feature type="strand" evidence="3">
    <location>
        <begin position="280"/>
        <end position="282"/>
    </location>
</feature>
<feature type="strand" evidence="4">
    <location>
        <begin position="284"/>
        <end position="286"/>
    </location>
</feature>
<feature type="strand" evidence="3">
    <location>
        <begin position="288"/>
        <end position="290"/>
    </location>
</feature>
<feature type="strand" evidence="3">
    <location>
        <begin position="295"/>
        <end position="297"/>
    </location>
</feature>
<feature type="helix" evidence="3">
    <location>
        <begin position="299"/>
        <end position="302"/>
    </location>
</feature>
<feature type="turn" evidence="3">
    <location>
        <begin position="303"/>
        <end position="306"/>
    </location>
</feature>
<feature type="helix" evidence="3">
    <location>
        <begin position="308"/>
        <end position="310"/>
    </location>
</feature>
<feature type="helix" evidence="3">
    <location>
        <begin position="316"/>
        <end position="329"/>
    </location>
</feature>
<feature type="turn" evidence="3">
    <location>
        <begin position="330"/>
        <end position="332"/>
    </location>
</feature>
<feature type="strand" evidence="3">
    <location>
        <begin position="338"/>
        <end position="347"/>
    </location>
</feature>
<feature type="strand" evidence="3">
    <location>
        <begin position="350"/>
        <end position="360"/>
    </location>
</feature>
<feature type="turn" evidence="3">
    <location>
        <begin position="363"/>
        <end position="366"/>
    </location>
</feature>
<feature type="helix" evidence="3">
    <location>
        <begin position="368"/>
        <end position="399"/>
    </location>
</feature>
<feature type="helix" evidence="3">
    <location>
        <begin position="413"/>
        <end position="422"/>
    </location>
</feature>
<feature type="helix" evidence="3">
    <location>
        <begin position="425"/>
        <end position="442"/>
    </location>
</feature>
<feature type="turn" evidence="3">
    <location>
        <begin position="443"/>
        <end position="445"/>
    </location>
</feature>
<feature type="helix" evidence="3">
    <location>
        <begin position="449"/>
        <end position="472"/>
    </location>
</feature>
<feature type="strand" evidence="4">
    <location>
        <begin position="473"/>
        <end position="475"/>
    </location>
</feature>
<feature type="helix" evidence="4">
    <location>
        <begin position="476"/>
        <end position="478"/>
    </location>
</feature>
<feature type="helix" evidence="3">
    <location>
        <begin position="479"/>
        <end position="495"/>
    </location>
</feature>
<reference key="1">
    <citation type="submission" date="2004-11" db="EMBL/GenBank/DDBJ databases">
        <title>Complete genome sequence of Thermus thermophilus HB8.</title>
        <authorList>
            <person name="Masui R."/>
            <person name="Kurokawa K."/>
            <person name="Nakagawa N."/>
            <person name="Tokunaga F."/>
            <person name="Koyama Y."/>
            <person name="Shibata T."/>
            <person name="Oshima T."/>
            <person name="Yokoyama S."/>
            <person name="Yasunaga T."/>
            <person name="Kuramitsu S."/>
        </authorList>
    </citation>
    <scope>NUCLEOTIDE SEQUENCE [LARGE SCALE GENOMIC DNA]</scope>
    <source>
        <strain>ATCC 27634 / DSM 579 / HB8</strain>
    </source>
</reference>
<reference key="2">
    <citation type="journal article" date="2012" name="J. Biol. Chem.">
        <title>Crystal structure of the largest subunit of a bacterial RNA-guided immune complex and its role in DNA target binding.</title>
        <authorList>
            <person name="Mulepati S."/>
            <person name="Orr A."/>
            <person name="Bailey S."/>
        </authorList>
    </citation>
    <scope>X-RAY CRYSTALLOGRAPHY (2.4 ANGSTROMS)</scope>
    <scope>SUBUNIT</scope>
    <source>
        <strain>ATCC 27634 / DSM 579 / HB8</strain>
    </source>
</reference>
<reference key="3">
    <citation type="journal article" date="2012" name="Mol. Cell">
        <title>Mechanism of foreign DNA selection in a bacterial adaptive immune system.</title>
        <authorList>
            <person name="Sashital D.G."/>
            <person name="Wiedenheft B."/>
            <person name="Doudna J.A."/>
        </authorList>
    </citation>
    <scope>X-RAY CRYSTALLOGRAPHY (2.3 ANGSTROMS)</scope>
    <scope>SUBUNIT</scope>
    <source>
        <strain>ATCC 27634 / DSM 579 / HB8</strain>
    </source>
</reference>